<sequence>MDSDASLVSSRPSSPEPDDLFLPARSKGGSSSGFTGGTVSSSTPSDCPPELSSELRGAMGASGAHPGDKLGGGGFKSSSSSTSSSTSSAATSSTKKDKKQMTEPELQQLRLKINSRERKRMHDLNIAMDGLREVMPYAHGPSVRKLSKIATLLLARNYILMLTNSLEEMKRLVSEIYGGHHAGFHPSACGGLAHSAPLPTATAHPAAAAHAAHHPAVHHPILPPAAAAAAAAAAAAAVSSASLPGSGLSSVGSIRPPHGLLKSPSAAAAAPLGGGGGGSGGSGGFQHWGGMPCPCSMCQVPPPHHHVSAMGAGTLPRLTSDAK</sequence>
<dbReference type="EMBL" id="AB038697">
    <property type="protein sequence ID" value="BAB18907.1"/>
    <property type="molecule type" value="mRNA"/>
</dbReference>
<dbReference type="EMBL" id="AF232929">
    <property type="protein sequence ID" value="AAF61722.1"/>
    <property type="molecule type" value="Genomic_DNA"/>
</dbReference>
<dbReference type="EMBL" id="BC051967">
    <property type="protein sequence ID" value="AAH51967.1"/>
    <property type="molecule type" value="mRNA"/>
</dbReference>
<dbReference type="CCDS" id="CCDS28323.1"/>
<dbReference type="RefSeq" id="NP_058663.2">
    <property type="nucleotide sequence ID" value="NM_016967.2"/>
</dbReference>
<dbReference type="RefSeq" id="XP_036015893.1">
    <property type="nucleotide sequence ID" value="XM_036160000.1"/>
</dbReference>
<dbReference type="SMR" id="Q9EQW6"/>
<dbReference type="BioGRID" id="206152">
    <property type="interactions" value="8"/>
</dbReference>
<dbReference type="FunCoup" id="Q9EQW6">
    <property type="interactions" value="552"/>
</dbReference>
<dbReference type="IntAct" id="Q9EQW6">
    <property type="interactions" value="4"/>
</dbReference>
<dbReference type="STRING" id="10090.ENSMUSP00000036797"/>
<dbReference type="GlyGen" id="Q9EQW6">
    <property type="glycosylation" value="1 site"/>
</dbReference>
<dbReference type="iPTMnet" id="Q9EQW6"/>
<dbReference type="PhosphoSitePlus" id="Q9EQW6"/>
<dbReference type="PaxDb" id="10090-ENSMUSP00000036797"/>
<dbReference type="ProteomicsDB" id="293515"/>
<dbReference type="Antibodypedia" id="917">
    <property type="antibodies" value="550 antibodies from 41 providers"/>
</dbReference>
<dbReference type="DNASU" id="50913"/>
<dbReference type="Ensembl" id="ENSMUST00000035608.10">
    <property type="protein sequence ID" value="ENSMUSP00000036797.9"/>
    <property type="gene ID" value="ENSMUSG00000039830.10"/>
</dbReference>
<dbReference type="GeneID" id="50913"/>
<dbReference type="KEGG" id="mmu:50913"/>
<dbReference type="UCSC" id="uc007zxe.1">
    <property type="organism name" value="mouse"/>
</dbReference>
<dbReference type="AGR" id="MGI:1355331"/>
<dbReference type="CTD" id="10215"/>
<dbReference type="MGI" id="MGI:1355331">
    <property type="gene designation" value="Olig2"/>
</dbReference>
<dbReference type="VEuPathDB" id="HostDB:ENSMUSG00000039830"/>
<dbReference type="eggNOG" id="KOG3898">
    <property type="taxonomic scope" value="Eukaryota"/>
</dbReference>
<dbReference type="GeneTree" id="ENSGT00940000161651"/>
<dbReference type="HOGENOM" id="CLU_065376_1_0_1"/>
<dbReference type="InParanoid" id="Q9EQW6"/>
<dbReference type="OMA" id="SFQHWGA"/>
<dbReference type="OrthoDB" id="10011855at2759"/>
<dbReference type="PhylomeDB" id="Q9EQW6"/>
<dbReference type="TreeFam" id="TF322733"/>
<dbReference type="BioGRID-ORCS" id="50913">
    <property type="hits" value="2 hits in 77 CRISPR screens"/>
</dbReference>
<dbReference type="ChiTaRS" id="Olig2">
    <property type="organism name" value="mouse"/>
</dbReference>
<dbReference type="PRO" id="PR:Q9EQW6"/>
<dbReference type="Proteomes" id="UP000000589">
    <property type="component" value="Chromosome 16"/>
</dbReference>
<dbReference type="RNAct" id="Q9EQW6">
    <property type="molecule type" value="protein"/>
</dbReference>
<dbReference type="Bgee" id="ENSMUSG00000039830">
    <property type="expression patterns" value="Expressed in future spinal cord and 104 other cell types or tissues"/>
</dbReference>
<dbReference type="ExpressionAtlas" id="Q9EQW6">
    <property type="expression patterns" value="baseline and differential"/>
</dbReference>
<dbReference type="GO" id="GO:0005737">
    <property type="term" value="C:cytoplasm"/>
    <property type="evidence" value="ECO:0000314"/>
    <property type="project" value="MGI"/>
</dbReference>
<dbReference type="GO" id="GO:0005634">
    <property type="term" value="C:nucleus"/>
    <property type="evidence" value="ECO:0000314"/>
    <property type="project" value="MGI"/>
</dbReference>
<dbReference type="GO" id="GO:0005667">
    <property type="term" value="C:transcription regulator complex"/>
    <property type="evidence" value="ECO:0000250"/>
    <property type="project" value="MGI"/>
</dbReference>
<dbReference type="GO" id="GO:0003700">
    <property type="term" value="F:DNA-binding transcription factor activity"/>
    <property type="evidence" value="ECO:0000314"/>
    <property type="project" value="MGI"/>
</dbReference>
<dbReference type="GO" id="GO:0000981">
    <property type="term" value="F:DNA-binding transcription factor activity, RNA polymerase II-specific"/>
    <property type="evidence" value="ECO:0000314"/>
    <property type="project" value="MGI"/>
</dbReference>
<dbReference type="GO" id="GO:0071837">
    <property type="term" value="F:HMG box domain binding"/>
    <property type="evidence" value="ECO:0000353"/>
    <property type="project" value="UniProtKB"/>
</dbReference>
<dbReference type="GO" id="GO:0042802">
    <property type="term" value="F:identical protein binding"/>
    <property type="evidence" value="ECO:0000353"/>
    <property type="project" value="MGI"/>
</dbReference>
<dbReference type="GO" id="GO:0046983">
    <property type="term" value="F:protein dimerization activity"/>
    <property type="evidence" value="ECO:0007669"/>
    <property type="project" value="InterPro"/>
</dbReference>
<dbReference type="GO" id="GO:1990837">
    <property type="term" value="F:sequence-specific double-stranded DNA binding"/>
    <property type="evidence" value="ECO:0007669"/>
    <property type="project" value="Ensembl"/>
</dbReference>
<dbReference type="GO" id="GO:0021953">
    <property type="term" value="P:central nervous system neuron differentiation"/>
    <property type="evidence" value="ECO:0000314"/>
    <property type="project" value="MGI"/>
</dbReference>
<dbReference type="GO" id="GO:0042552">
    <property type="term" value="P:myelination"/>
    <property type="evidence" value="ECO:0000315"/>
    <property type="project" value="MGI"/>
</dbReference>
<dbReference type="GO" id="GO:0045665">
    <property type="term" value="P:negative regulation of neuron differentiation"/>
    <property type="evidence" value="ECO:0000314"/>
    <property type="project" value="MGI"/>
</dbReference>
<dbReference type="GO" id="GO:0000122">
    <property type="term" value="P:negative regulation of transcription by RNA polymerase II"/>
    <property type="evidence" value="ECO:0000314"/>
    <property type="project" value="MGI"/>
</dbReference>
<dbReference type="GO" id="GO:0007399">
    <property type="term" value="P:nervous system development"/>
    <property type="evidence" value="ECO:0000314"/>
    <property type="project" value="MGI"/>
</dbReference>
<dbReference type="GO" id="GO:0048663">
    <property type="term" value="P:neuron fate commitment"/>
    <property type="evidence" value="ECO:0000315"/>
    <property type="project" value="MGI"/>
</dbReference>
<dbReference type="GO" id="GO:0048709">
    <property type="term" value="P:oligodendrocyte differentiation"/>
    <property type="evidence" value="ECO:0000315"/>
    <property type="project" value="MGI"/>
</dbReference>
<dbReference type="GO" id="GO:0048714">
    <property type="term" value="P:positive regulation of oligodendrocyte differentiation"/>
    <property type="evidence" value="ECO:0000316"/>
    <property type="project" value="MGI"/>
</dbReference>
<dbReference type="GO" id="GO:0006355">
    <property type="term" value="P:regulation of DNA-templated transcription"/>
    <property type="evidence" value="ECO:0000314"/>
    <property type="project" value="MGI"/>
</dbReference>
<dbReference type="GO" id="GO:0021522">
    <property type="term" value="P:spinal cord motor neuron differentiation"/>
    <property type="evidence" value="ECO:0000315"/>
    <property type="project" value="MGI"/>
</dbReference>
<dbReference type="GO" id="GO:0021529">
    <property type="term" value="P:spinal cord oligodendrocyte cell differentiation"/>
    <property type="evidence" value="ECO:0000316"/>
    <property type="project" value="MGI"/>
</dbReference>
<dbReference type="GO" id="GO:0021530">
    <property type="term" value="P:spinal cord oligodendrocyte cell fate specification"/>
    <property type="evidence" value="ECO:0000314"/>
    <property type="project" value="MGI"/>
</dbReference>
<dbReference type="GO" id="GO:0021794">
    <property type="term" value="P:thalamus development"/>
    <property type="evidence" value="ECO:0000315"/>
    <property type="project" value="MGI"/>
</dbReference>
<dbReference type="CDD" id="cd18940">
    <property type="entry name" value="bHLH_TS_OLIG2"/>
    <property type="match status" value="1"/>
</dbReference>
<dbReference type="FunFam" id="4.10.280.10:FF:000031">
    <property type="entry name" value="Oligodendrocyte transcription factor 3"/>
    <property type="match status" value="1"/>
</dbReference>
<dbReference type="Gene3D" id="4.10.280.10">
    <property type="entry name" value="Helix-loop-helix DNA-binding domain"/>
    <property type="match status" value="1"/>
</dbReference>
<dbReference type="InterPro" id="IPR011598">
    <property type="entry name" value="bHLH_dom"/>
</dbReference>
<dbReference type="InterPro" id="IPR050359">
    <property type="entry name" value="bHLH_transcription_factors"/>
</dbReference>
<dbReference type="InterPro" id="IPR036638">
    <property type="entry name" value="HLH_DNA-bd_sf"/>
</dbReference>
<dbReference type="InterPro" id="IPR032658">
    <property type="entry name" value="Olig2_bHLH"/>
</dbReference>
<dbReference type="PANTHER" id="PTHR19290">
    <property type="entry name" value="BASIC HELIX-LOOP-HELIX PROTEIN NEUROGENIN-RELATED"/>
    <property type="match status" value="1"/>
</dbReference>
<dbReference type="PANTHER" id="PTHR19290:SF32">
    <property type="entry name" value="OLIGODENDROCYTE TRANSCRIPTION FACTOR 2"/>
    <property type="match status" value="1"/>
</dbReference>
<dbReference type="Pfam" id="PF00010">
    <property type="entry name" value="HLH"/>
    <property type="match status" value="1"/>
</dbReference>
<dbReference type="SMART" id="SM00353">
    <property type="entry name" value="HLH"/>
    <property type="match status" value="1"/>
</dbReference>
<dbReference type="SUPFAM" id="SSF47459">
    <property type="entry name" value="HLH, helix-loop-helix DNA-binding domain"/>
    <property type="match status" value="1"/>
</dbReference>
<dbReference type="PROSITE" id="PS50888">
    <property type="entry name" value="BHLH"/>
    <property type="match status" value="1"/>
</dbReference>
<accession>Q9EQW6</accession>
<accession>Q9JKN4</accession>
<organism>
    <name type="scientific">Mus musculus</name>
    <name type="common">Mouse</name>
    <dbReference type="NCBI Taxonomy" id="10090"/>
    <lineage>
        <taxon>Eukaryota</taxon>
        <taxon>Metazoa</taxon>
        <taxon>Chordata</taxon>
        <taxon>Craniata</taxon>
        <taxon>Vertebrata</taxon>
        <taxon>Euteleostomi</taxon>
        <taxon>Mammalia</taxon>
        <taxon>Eutheria</taxon>
        <taxon>Euarchontoglires</taxon>
        <taxon>Glires</taxon>
        <taxon>Rodentia</taxon>
        <taxon>Myomorpha</taxon>
        <taxon>Muroidea</taxon>
        <taxon>Muridae</taxon>
        <taxon>Murinae</taxon>
        <taxon>Mus</taxon>
        <taxon>Mus</taxon>
    </lineage>
</organism>
<comment type="function">
    <text evidence="6 7 10">Required for oligodendrocyte and motor neuron specification in the spinal cord, as well as for the development of somatic motor neurons in the hindbrain (PubMed:11955448, PubMed:12121626, PubMed:16908628). Functions together with ZNF488 to promote oligodendrocyte differentiation (PubMed:16908628). Cooperates with OLIG1 to establish the pMN domain of the embryonic neural tube (PubMed:11955448, PubMed:12121626). Antagonist of V2 interneuron and of NKX2-2-induced V3 interneuron development (PubMed:11955448, PubMed:12121626).</text>
</comment>
<comment type="subunit">
    <text evidence="8 10">Interacts with NKX2-2 (PubMed:14573534). Interacts with ZNF488 (PubMed:16908628).</text>
</comment>
<comment type="interaction">
    <interactant intactId="EBI-1213740">
        <id>Q9EQW6</id>
    </interactant>
    <interactant intactId="EBI-309167">
        <id>P41136</id>
        <label>Id2</label>
    </interactant>
    <organismsDiffer>false</organismsDiffer>
    <experiments>4</experiments>
</comment>
<comment type="interaction">
    <interactant intactId="EBI-1213740">
        <id>Q9EQW6</id>
    </interactant>
    <interactant intactId="EBI-1213725">
        <id>P41139</id>
        <label>Id4</label>
    </interactant>
    <organismsDiffer>false</organismsDiffer>
    <experiments>5</experiments>
</comment>
<comment type="subcellular location">
    <subcellularLocation>
        <location>Nucleus</location>
    </subcellularLocation>
    <subcellularLocation>
        <location>Cytoplasm</location>
    </subcellularLocation>
    <text>The NLS contained in the bHLH domain could be masked in the native form and translocation to the nucleus could be mediated by interaction either with class E bHLH partner protein or with NKX2-2.</text>
</comment>
<comment type="tissue specificity">
    <text evidence="5">Expressed specifically in the brain.</text>
</comment>
<comment type="developmental stage">
    <text evidence="4 5">Expressed in the ventral spinal cord as early as 9.5 dpc. Expression becomes progressively restricted to a narrow zone within the ventral neuroepithelium of the spinal cord. In the 14.5 dpc spinal cord, expressed in the oligodendrocyte progenitors of the ventral ventricular zone, but not dorsal root ganglia Schwann cells. Also expressed scattered in the mantle zone, likely corresponding to oligodendrocyte progenitors migrating out from their site of origin. In the brain, from 10.5 through 14.5 dpc, expressed in numerous cells in the ventricular and subventricular zones of the lateral and medial ganglionic eminences, suggesting that expression might not be limited to the oligodendrocytic lineage. By 15.5 dpc, dispersed throughout the gray matter, with little or no residual expression in the ventricular zone. In the postnatal brain, present preferentially in the white matter, such as corpus callosum and cerebellar medulla. Expressed in the 13.5 and 14.5 dpc retina and in the olfactory epithelium from 11.5 dpc onward.</text>
</comment>
<comment type="induction">
    <text evidence="3 9">By SHH. Also induced by NKX6-1 in the developing spinal cord, but not in the rostral hindbrain.</text>
</comment>
<comment type="domain">
    <text>The bHLH is essential for interaction with NKX2-2.</text>
</comment>
<protein>
    <recommendedName>
        <fullName>Oligodendrocyte transcription factor 2</fullName>
        <shortName>Oligo2</shortName>
    </recommendedName>
</protein>
<gene>
    <name type="primary">Olig2</name>
</gene>
<reference key="1">
    <citation type="journal article" date="2000" name="Mech. Dev.">
        <title>Dynamic expression of basic helix-loop-helix Olig family members: implication of Olig2 in neuron and oligodendrocyte differentiation and identification of a new member, Olig3.</title>
        <authorList>
            <person name="Takebayashi H."/>
            <person name="Yoshida S."/>
            <person name="Sugimori M."/>
            <person name="Kosako H."/>
            <person name="Kominami R."/>
            <person name="Nakafuku M."/>
            <person name="Nabeshima Y."/>
        </authorList>
    </citation>
    <scope>NUCLEOTIDE SEQUENCE [MRNA]</scope>
    <scope>TISSUE SPECIFICITY</scope>
    <scope>DEVELOPMENTAL STAGE</scope>
    <source>
        <strain>C57BL/6J</strain>
        <tissue>Brain</tissue>
    </source>
</reference>
<reference key="2">
    <citation type="journal article" date="2000" name="Neuron">
        <title>Identification of a novel family of oligodendrocyte lineage-specific basic helix-loop-helix transcription factors.</title>
        <authorList>
            <person name="Zhou Q."/>
            <person name="Wang S."/>
            <person name="Anderson D.J."/>
        </authorList>
    </citation>
    <scope>NUCLEOTIDE SEQUENCE [GENOMIC DNA]</scope>
    <scope>DEVELOPMENTAL STAGE</scope>
</reference>
<reference key="3">
    <citation type="journal article" date="2004" name="Genome Res.">
        <title>The status, quality, and expansion of the NIH full-length cDNA project: the Mammalian Gene Collection (MGC).</title>
        <authorList>
            <consortium name="The MGC Project Team"/>
        </authorList>
    </citation>
    <scope>NUCLEOTIDE SEQUENCE [LARGE SCALE MRNA]</scope>
    <source>
        <strain>C57BL/6J</strain>
        <tissue>Brain</tissue>
    </source>
</reference>
<reference key="4">
    <citation type="journal article" date="2000" name="Neuron">
        <title>Sonic hedgehog-regulated oligodendrocyte lineage genes encoding bHLH proteins in the mammalian central nervous system.</title>
        <authorList>
            <person name="Lu Q.R."/>
            <person name="Yuk D.-I."/>
            <person name="Alberta J.A."/>
            <person name="Zhu Z."/>
            <person name="Pawlitzky I."/>
            <person name="Chan J.A."/>
            <person name="McMahon A.P."/>
            <person name="Stiles C.D."/>
            <person name="Rowitch D.H."/>
        </authorList>
    </citation>
    <scope>INDUCTION BY SHH</scope>
</reference>
<reference key="5">
    <citation type="journal article" date="2002" name="Cell">
        <title>Common developmental requirement for Olig function indicates a motor neuron/oligodendrocyte connection.</title>
        <authorList>
            <person name="Lu Q.R."/>
            <person name="Sun T."/>
            <person name="Zhu Z."/>
            <person name="Ma N."/>
            <person name="Garcia M."/>
            <person name="Stiles C.D."/>
            <person name="Rowitch D.H."/>
        </authorList>
    </citation>
    <scope>FUNCTION</scope>
</reference>
<reference key="6">
    <citation type="journal article" date="2002" name="Curr. Biol.">
        <title>The basic helix-loop-helix factor olig2 is essential for the development of motoneuron and oligodendrocyte lineages.</title>
        <authorList>
            <person name="Takebayashi H."/>
            <person name="Nabeshima Y."/>
            <person name="Yoshida S."/>
            <person name="Chisaka O."/>
            <person name="Ikenaka K."/>
            <person name="Nabeshima Y."/>
        </authorList>
    </citation>
    <scope>FUNCTION</scope>
</reference>
<reference key="7">
    <citation type="journal article" date="2002" name="Mech. Dev.">
        <title>Non-overlapping expression of Olig3 and Olig2 in the embryonic neural tube.</title>
        <authorList>
            <person name="Takebayashi H."/>
            <person name="Ohtsuki T."/>
            <person name="Uchida T."/>
            <person name="Kawamoto S."/>
            <person name="Okubo K."/>
            <person name="Ikenaka K."/>
            <person name="Takeichi M."/>
            <person name="Chisaka O."/>
            <person name="Nabeshima Y."/>
        </authorList>
    </citation>
    <scope>SUBCELLULAR LOCATION</scope>
</reference>
<reference key="8">
    <citation type="journal article" date="2003" name="Development">
        <title>Region-specific and stage-dependent regulation of Olig gene expression and oligodendrogenesis by Nkx6.1 homeodomain transcription factor.</title>
        <authorList>
            <person name="Liu R."/>
            <person name="Cai J."/>
            <person name="Hu X."/>
            <person name="Tan M."/>
            <person name="Qi Y."/>
            <person name="German M."/>
            <person name="Rubenstein J.L.R."/>
            <person name="Sander M."/>
            <person name="Qiu M."/>
        </authorList>
    </citation>
    <scope>INDUCTION BY NKX6-1</scope>
</reference>
<reference key="9">
    <citation type="journal article" date="2003" name="J. Neurosci.">
        <title>Cross-repressive interaction of the Olig2 and Nkx2.2 transcription factors in developing neural tube associated with formation of a specific physical complex.</title>
        <authorList>
            <person name="Sun T."/>
            <person name="Dong H."/>
            <person name="Wu L."/>
            <person name="Kane M."/>
            <person name="Rowitch D.H."/>
            <person name="Stiles C.D."/>
        </authorList>
    </citation>
    <scope>INTERACTION WITH NKX2-2</scope>
    <scope>SUBCELLULAR LOCATION</scope>
</reference>
<reference key="10">
    <citation type="journal article" date="2006" name="Development">
        <title>An oligodendrocyte-specific zinc-finger transcription regulator cooperates with Olig2 to promote oligodendrocyte differentiation.</title>
        <authorList>
            <person name="Wang S.Z."/>
            <person name="Dulin J."/>
            <person name="Wu H."/>
            <person name="Hurlock E."/>
            <person name="Lee S.E."/>
            <person name="Jansson K."/>
            <person name="Lu Q.R."/>
        </authorList>
    </citation>
    <scope>FUNCTION</scope>
    <scope>INTERACTION WITH ZNF488</scope>
</reference>
<name>OLIG2_MOUSE</name>
<keyword id="KW-0963">Cytoplasm</keyword>
<keyword id="KW-0217">Developmental protein</keyword>
<keyword id="KW-0238">DNA-binding</keyword>
<keyword id="KW-0539">Nucleus</keyword>
<keyword id="KW-1185">Reference proteome</keyword>
<keyword id="KW-0804">Transcription</keyword>
<keyword id="KW-0805">Transcription regulation</keyword>
<proteinExistence type="evidence at protein level"/>
<feature type="chain" id="PRO_0000127415" description="Oligodendrocyte transcription factor 2">
    <location>
        <begin position="1"/>
        <end position="323"/>
    </location>
</feature>
<feature type="domain" description="bHLH" evidence="1">
    <location>
        <begin position="108"/>
        <end position="162"/>
    </location>
</feature>
<feature type="region of interest" description="Disordered" evidence="2">
    <location>
        <begin position="1"/>
        <end position="107"/>
    </location>
</feature>
<feature type="compositionally biased region" description="Polar residues" evidence="2">
    <location>
        <begin position="1"/>
        <end position="13"/>
    </location>
</feature>
<feature type="compositionally biased region" description="Low complexity" evidence="2">
    <location>
        <begin position="77"/>
        <end position="93"/>
    </location>
</feature>
<feature type="sequence conflict" description="In Ref. 2; AAF61722." evidence="11" ref="2">
    <original>L</original>
    <variation>I</variation>
    <location>
        <position position="198"/>
    </location>
</feature>
<feature type="sequence conflict" description="In Ref. 2." evidence="11" ref="2">
    <original>P</original>
    <variation>PTRHGAP</variation>
    <location>
        <position position="205"/>
    </location>
</feature>
<evidence type="ECO:0000255" key="1">
    <source>
        <dbReference type="PROSITE-ProRule" id="PRU00981"/>
    </source>
</evidence>
<evidence type="ECO:0000256" key="2">
    <source>
        <dbReference type="SAM" id="MobiDB-lite"/>
    </source>
</evidence>
<evidence type="ECO:0000269" key="3">
    <source>
    </source>
</evidence>
<evidence type="ECO:0000269" key="4">
    <source>
    </source>
</evidence>
<evidence type="ECO:0000269" key="5">
    <source>
    </source>
</evidence>
<evidence type="ECO:0000269" key="6">
    <source>
    </source>
</evidence>
<evidence type="ECO:0000269" key="7">
    <source>
    </source>
</evidence>
<evidence type="ECO:0000269" key="8">
    <source>
    </source>
</evidence>
<evidence type="ECO:0000269" key="9">
    <source>
    </source>
</evidence>
<evidence type="ECO:0000269" key="10">
    <source>
    </source>
</evidence>
<evidence type="ECO:0000305" key="11"/>